<reference key="1">
    <citation type="journal article" date="2002" name="Nature">
        <title>Comparison of the genomes of two Xanthomonas pathogens with differing host specificities.</title>
        <authorList>
            <person name="da Silva A.C.R."/>
            <person name="Ferro J.A."/>
            <person name="Reinach F.C."/>
            <person name="Farah C.S."/>
            <person name="Furlan L.R."/>
            <person name="Quaggio R.B."/>
            <person name="Monteiro-Vitorello C.B."/>
            <person name="Van Sluys M.A."/>
            <person name="Almeida N.F. Jr."/>
            <person name="Alves L.M.C."/>
            <person name="do Amaral A.M."/>
            <person name="Bertolini M.C."/>
            <person name="Camargo L.E.A."/>
            <person name="Camarotte G."/>
            <person name="Cannavan F."/>
            <person name="Cardozo J."/>
            <person name="Chambergo F."/>
            <person name="Ciapina L.P."/>
            <person name="Cicarelli R.M.B."/>
            <person name="Coutinho L.L."/>
            <person name="Cursino-Santos J.R."/>
            <person name="El-Dorry H."/>
            <person name="Faria J.B."/>
            <person name="Ferreira A.J.S."/>
            <person name="Ferreira R.C.C."/>
            <person name="Ferro M.I.T."/>
            <person name="Formighieri E.F."/>
            <person name="Franco M.C."/>
            <person name="Greggio C.C."/>
            <person name="Gruber A."/>
            <person name="Katsuyama A.M."/>
            <person name="Kishi L.T."/>
            <person name="Leite R.P."/>
            <person name="Lemos E.G.M."/>
            <person name="Lemos M.V.F."/>
            <person name="Locali E.C."/>
            <person name="Machado M.A."/>
            <person name="Madeira A.M.B.N."/>
            <person name="Martinez-Rossi N.M."/>
            <person name="Martins E.C."/>
            <person name="Meidanis J."/>
            <person name="Menck C.F.M."/>
            <person name="Miyaki C.Y."/>
            <person name="Moon D.H."/>
            <person name="Moreira L.M."/>
            <person name="Novo M.T.M."/>
            <person name="Okura V.K."/>
            <person name="Oliveira M.C."/>
            <person name="Oliveira V.R."/>
            <person name="Pereira H.A."/>
            <person name="Rossi A."/>
            <person name="Sena J.A.D."/>
            <person name="Silva C."/>
            <person name="de Souza R.F."/>
            <person name="Spinola L.A.F."/>
            <person name="Takita M.A."/>
            <person name="Tamura R.E."/>
            <person name="Teixeira E.C."/>
            <person name="Tezza R.I.D."/>
            <person name="Trindade dos Santos M."/>
            <person name="Truffi D."/>
            <person name="Tsai S.M."/>
            <person name="White F.F."/>
            <person name="Setubal J.C."/>
            <person name="Kitajima J.P."/>
        </authorList>
    </citation>
    <scope>NUCLEOTIDE SEQUENCE [LARGE SCALE GENOMIC DNA]</scope>
    <source>
        <strain>ATCC 33913 / DSM 3586 / NCPPB 528 / LMG 568 / P 25</strain>
    </source>
</reference>
<protein>
    <recommendedName>
        <fullName evidence="1">Porphobilinogen deaminase</fullName>
        <shortName evidence="1">PBG</shortName>
        <ecNumber evidence="1">2.5.1.61</ecNumber>
    </recommendedName>
    <alternativeName>
        <fullName evidence="1">Hydroxymethylbilane synthase</fullName>
        <shortName evidence="1">HMBS</shortName>
    </alternativeName>
    <alternativeName>
        <fullName evidence="1">Pre-uroporphyrinogen synthase</fullName>
    </alternativeName>
</protein>
<comment type="function">
    <text evidence="1">Tetrapolymerization of the monopyrrole PBG into the hydroxymethylbilane pre-uroporphyrinogen in several discrete steps.</text>
</comment>
<comment type="catalytic activity">
    <reaction evidence="1">
        <text>4 porphobilinogen + H2O = hydroxymethylbilane + 4 NH4(+)</text>
        <dbReference type="Rhea" id="RHEA:13185"/>
        <dbReference type="ChEBI" id="CHEBI:15377"/>
        <dbReference type="ChEBI" id="CHEBI:28938"/>
        <dbReference type="ChEBI" id="CHEBI:57845"/>
        <dbReference type="ChEBI" id="CHEBI:58126"/>
        <dbReference type="EC" id="2.5.1.61"/>
    </reaction>
</comment>
<comment type="cofactor">
    <cofactor evidence="1">
        <name>dipyrromethane</name>
        <dbReference type="ChEBI" id="CHEBI:60342"/>
    </cofactor>
    <text evidence="1">Binds 1 dipyrromethane group covalently.</text>
</comment>
<comment type="pathway">
    <text evidence="1">Porphyrin-containing compound metabolism; protoporphyrin-IX biosynthesis; coproporphyrinogen-III from 5-aminolevulinate: step 2/4.</text>
</comment>
<comment type="subunit">
    <text evidence="1">Monomer.</text>
</comment>
<comment type="miscellaneous">
    <text evidence="1">The porphobilinogen subunits are added to the dipyrromethane group.</text>
</comment>
<comment type="similarity">
    <text evidence="1">Belongs to the HMBS family.</text>
</comment>
<name>HEM3_XANCP</name>
<dbReference type="EC" id="2.5.1.61" evidence="1"/>
<dbReference type="EMBL" id="AE008922">
    <property type="protein sequence ID" value="AAM42781.1"/>
    <property type="molecule type" value="Genomic_DNA"/>
</dbReference>
<dbReference type="RefSeq" id="NP_638857.1">
    <property type="nucleotide sequence ID" value="NC_003902.1"/>
</dbReference>
<dbReference type="RefSeq" id="WP_011038603.1">
    <property type="nucleotide sequence ID" value="NC_003902.1"/>
</dbReference>
<dbReference type="SMR" id="Q8P536"/>
<dbReference type="STRING" id="190485.XCC3511"/>
<dbReference type="EnsemblBacteria" id="AAM42781">
    <property type="protein sequence ID" value="AAM42781"/>
    <property type="gene ID" value="XCC3511"/>
</dbReference>
<dbReference type="KEGG" id="xcc:XCC3511"/>
<dbReference type="PATRIC" id="fig|190485.4.peg.3754"/>
<dbReference type="eggNOG" id="COG0181">
    <property type="taxonomic scope" value="Bacteria"/>
</dbReference>
<dbReference type="HOGENOM" id="CLU_019704_0_2_6"/>
<dbReference type="OrthoDB" id="9810298at2"/>
<dbReference type="UniPathway" id="UPA00251">
    <property type="reaction ID" value="UER00319"/>
</dbReference>
<dbReference type="Proteomes" id="UP000001010">
    <property type="component" value="Chromosome"/>
</dbReference>
<dbReference type="GO" id="GO:0005737">
    <property type="term" value="C:cytoplasm"/>
    <property type="evidence" value="ECO:0000318"/>
    <property type="project" value="GO_Central"/>
</dbReference>
<dbReference type="GO" id="GO:0004418">
    <property type="term" value="F:hydroxymethylbilane synthase activity"/>
    <property type="evidence" value="ECO:0000318"/>
    <property type="project" value="GO_Central"/>
</dbReference>
<dbReference type="GO" id="GO:0006783">
    <property type="term" value="P:heme biosynthetic process"/>
    <property type="evidence" value="ECO:0000318"/>
    <property type="project" value="GO_Central"/>
</dbReference>
<dbReference type="GO" id="GO:0006782">
    <property type="term" value="P:protoporphyrinogen IX biosynthetic process"/>
    <property type="evidence" value="ECO:0007669"/>
    <property type="project" value="UniProtKB-UniRule"/>
</dbReference>
<dbReference type="CDD" id="cd13646">
    <property type="entry name" value="PBP2_EcHMBS_like"/>
    <property type="match status" value="1"/>
</dbReference>
<dbReference type="FunFam" id="3.40.190.10:FF:000004">
    <property type="entry name" value="Porphobilinogen deaminase"/>
    <property type="match status" value="1"/>
</dbReference>
<dbReference type="FunFam" id="3.40.190.10:FF:000005">
    <property type="entry name" value="Porphobilinogen deaminase"/>
    <property type="match status" value="1"/>
</dbReference>
<dbReference type="Gene3D" id="3.40.190.10">
    <property type="entry name" value="Periplasmic binding protein-like II"/>
    <property type="match status" value="2"/>
</dbReference>
<dbReference type="Gene3D" id="3.30.160.40">
    <property type="entry name" value="Porphobilinogen deaminase, C-terminal domain"/>
    <property type="match status" value="1"/>
</dbReference>
<dbReference type="HAMAP" id="MF_00260">
    <property type="entry name" value="Porphobil_deam"/>
    <property type="match status" value="1"/>
</dbReference>
<dbReference type="InterPro" id="IPR000860">
    <property type="entry name" value="HemC"/>
</dbReference>
<dbReference type="InterPro" id="IPR022419">
    <property type="entry name" value="Porphobilin_deaminase_cofac_BS"/>
</dbReference>
<dbReference type="InterPro" id="IPR022417">
    <property type="entry name" value="Porphobilin_deaminase_N"/>
</dbReference>
<dbReference type="InterPro" id="IPR022418">
    <property type="entry name" value="Porphobilinogen_deaminase_C"/>
</dbReference>
<dbReference type="InterPro" id="IPR036803">
    <property type="entry name" value="Porphobilinogen_deaminase_C_sf"/>
</dbReference>
<dbReference type="NCBIfam" id="TIGR00212">
    <property type="entry name" value="hemC"/>
    <property type="match status" value="1"/>
</dbReference>
<dbReference type="PANTHER" id="PTHR11557">
    <property type="entry name" value="PORPHOBILINOGEN DEAMINASE"/>
    <property type="match status" value="1"/>
</dbReference>
<dbReference type="PANTHER" id="PTHR11557:SF0">
    <property type="entry name" value="PORPHOBILINOGEN DEAMINASE"/>
    <property type="match status" value="1"/>
</dbReference>
<dbReference type="Pfam" id="PF01379">
    <property type="entry name" value="Porphobil_deam"/>
    <property type="match status" value="1"/>
</dbReference>
<dbReference type="Pfam" id="PF03900">
    <property type="entry name" value="Porphobil_deamC"/>
    <property type="match status" value="1"/>
</dbReference>
<dbReference type="PIRSF" id="PIRSF001438">
    <property type="entry name" value="4pyrrol_synth_OHMeBilane_synth"/>
    <property type="match status" value="1"/>
</dbReference>
<dbReference type="PRINTS" id="PR00151">
    <property type="entry name" value="PORPHBDMNASE"/>
</dbReference>
<dbReference type="SUPFAM" id="SSF53850">
    <property type="entry name" value="Periplasmic binding protein-like II"/>
    <property type="match status" value="1"/>
</dbReference>
<dbReference type="SUPFAM" id="SSF54782">
    <property type="entry name" value="Porphobilinogen deaminase (hydroxymethylbilane synthase), C-terminal domain"/>
    <property type="match status" value="1"/>
</dbReference>
<dbReference type="PROSITE" id="PS00533">
    <property type="entry name" value="PORPHOBILINOGEN_DEAM"/>
    <property type="match status" value="1"/>
</dbReference>
<accession>Q8P536</accession>
<gene>
    <name evidence="1" type="primary">hemC</name>
    <name type="ordered locus">XCC3511</name>
</gene>
<sequence>MTTLRIATRKSPLALWQSEHVATALRQHHPGLEVVLVPMSTRGDEVLDRSLAAIGGKGLFLKELELAMLRGEADCAVHSLKDVPMELDAPFVLPAILERGDPADALVSNLYATLQALPLGARVGTSSLRRQAQLRAARPDLELIDLRGNVNTRLAKLDNGGYDAIVLACAGLQRLGLEARITARLDAPEWLPAPAQGAVAVECRGDDARIHDLLAVLDAGRTRACVEAERAMNRALHGSCHVPVAAFARWEGEDLFLQGMVGSASDGRLIHAEAHGSPDATEDLGRLVADGLFEKGAAQLLAEL</sequence>
<keyword id="KW-0627">Porphyrin biosynthesis</keyword>
<keyword id="KW-1185">Reference proteome</keyword>
<keyword id="KW-0808">Transferase</keyword>
<organism>
    <name type="scientific">Xanthomonas campestris pv. campestris (strain ATCC 33913 / DSM 3586 / NCPPB 528 / LMG 568 / P 25)</name>
    <dbReference type="NCBI Taxonomy" id="190485"/>
    <lineage>
        <taxon>Bacteria</taxon>
        <taxon>Pseudomonadati</taxon>
        <taxon>Pseudomonadota</taxon>
        <taxon>Gammaproteobacteria</taxon>
        <taxon>Lysobacterales</taxon>
        <taxon>Lysobacteraceae</taxon>
        <taxon>Xanthomonas</taxon>
    </lineage>
</organism>
<proteinExistence type="inferred from homology"/>
<evidence type="ECO:0000255" key="1">
    <source>
        <dbReference type="HAMAP-Rule" id="MF_00260"/>
    </source>
</evidence>
<feature type="chain" id="PRO_0000143011" description="Porphobilinogen deaminase">
    <location>
        <begin position="1"/>
        <end position="304"/>
    </location>
</feature>
<feature type="modified residue" description="S-(dipyrrolylmethanemethyl)cysteine" evidence="1">
    <location>
        <position position="240"/>
    </location>
</feature>